<keyword id="KW-0687">Ribonucleoprotein</keyword>
<keyword id="KW-0689">Ribosomal protein</keyword>
<accession>B4SKX1</accession>
<gene>
    <name evidence="1" type="primary">rpmC</name>
    <name type="ordered locus">Smal_0764</name>
</gene>
<protein>
    <recommendedName>
        <fullName evidence="1">Large ribosomal subunit protein uL29</fullName>
    </recommendedName>
    <alternativeName>
        <fullName evidence="2">50S ribosomal protein L29</fullName>
    </alternativeName>
</protein>
<dbReference type="EMBL" id="CP001111">
    <property type="protein sequence ID" value="ACF50469.1"/>
    <property type="molecule type" value="Genomic_DNA"/>
</dbReference>
<dbReference type="RefSeq" id="WP_004145353.1">
    <property type="nucleotide sequence ID" value="NC_011071.1"/>
</dbReference>
<dbReference type="SMR" id="B4SKX1"/>
<dbReference type="STRING" id="391008.Smal_0764"/>
<dbReference type="KEGG" id="smt:Smal_0764"/>
<dbReference type="eggNOG" id="COG0255">
    <property type="taxonomic scope" value="Bacteria"/>
</dbReference>
<dbReference type="HOGENOM" id="CLU_158491_1_2_6"/>
<dbReference type="OrthoDB" id="9815192at2"/>
<dbReference type="Proteomes" id="UP000001867">
    <property type="component" value="Chromosome"/>
</dbReference>
<dbReference type="GO" id="GO:0022625">
    <property type="term" value="C:cytosolic large ribosomal subunit"/>
    <property type="evidence" value="ECO:0007669"/>
    <property type="project" value="TreeGrafter"/>
</dbReference>
<dbReference type="GO" id="GO:0003735">
    <property type="term" value="F:structural constituent of ribosome"/>
    <property type="evidence" value="ECO:0007669"/>
    <property type="project" value="InterPro"/>
</dbReference>
<dbReference type="GO" id="GO:0006412">
    <property type="term" value="P:translation"/>
    <property type="evidence" value="ECO:0007669"/>
    <property type="project" value="UniProtKB-UniRule"/>
</dbReference>
<dbReference type="CDD" id="cd00427">
    <property type="entry name" value="Ribosomal_L29_HIP"/>
    <property type="match status" value="1"/>
</dbReference>
<dbReference type="FunFam" id="1.10.287.310:FF:000001">
    <property type="entry name" value="50S ribosomal protein L29"/>
    <property type="match status" value="1"/>
</dbReference>
<dbReference type="Gene3D" id="1.10.287.310">
    <property type="match status" value="1"/>
</dbReference>
<dbReference type="HAMAP" id="MF_00374">
    <property type="entry name" value="Ribosomal_uL29"/>
    <property type="match status" value="1"/>
</dbReference>
<dbReference type="InterPro" id="IPR050063">
    <property type="entry name" value="Ribosomal_protein_uL29"/>
</dbReference>
<dbReference type="InterPro" id="IPR001854">
    <property type="entry name" value="Ribosomal_uL29"/>
</dbReference>
<dbReference type="InterPro" id="IPR018254">
    <property type="entry name" value="Ribosomal_uL29_CS"/>
</dbReference>
<dbReference type="InterPro" id="IPR036049">
    <property type="entry name" value="Ribosomal_uL29_sf"/>
</dbReference>
<dbReference type="NCBIfam" id="TIGR00012">
    <property type="entry name" value="L29"/>
    <property type="match status" value="1"/>
</dbReference>
<dbReference type="PANTHER" id="PTHR10916">
    <property type="entry name" value="60S RIBOSOMAL PROTEIN L35/50S RIBOSOMAL PROTEIN L29"/>
    <property type="match status" value="1"/>
</dbReference>
<dbReference type="PANTHER" id="PTHR10916:SF0">
    <property type="entry name" value="LARGE RIBOSOMAL SUBUNIT PROTEIN UL29C"/>
    <property type="match status" value="1"/>
</dbReference>
<dbReference type="Pfam" id="PF00831">
    <property type="entry name" value="Ribosomal_L29"/>
    <property type="match status" value="1"/>
</dbReference>
<dbReference type="SUPFAM" id="SSF46561">
    <property type="entry name" value="Ribosomal protein L29 (L29p)"/>
    <property type="match status" value="1"/>
</dbReference>
<dbReference type="PROSITE" id="PS00579">
    <property type="entry name" value="RIBOSOMAL_L29"/>
    <property type="match status" value="1"/>
</dbReference>
<name>RL29_STRM5</name>
<proteinExistence type="inferred from homology"/>
<comment type="similarity">
    <text evidence="1">Belongs to the universal ribosomal protein uL29 family.</text>
</comment>
<sequence>MELKTLREKSADELKAHLIDLRKEQFSVRMQQVTGQLPKTHDIRRVRREIARVKTLLGSTK</sequence>
<reference key="1">
    <citation type="submission" date="2008-06" db="EMBL/GenBank/DDBJ databases">
        <title>Complete sequence of Stenotrophomonas maltophilia R551-3.</title>
        <authorList>
            <consortium name="US DOE Joint Genome Institute"/>
            <person name="Lucas S."/>
            <person name="Copeland A."/>
            <person name="Lapidus A."/>
            <person name="Glavina del Rio T."/>
            <person name="Dalin E."/>
            <person name="Tice H."/>
            <person name="Pitluck S."/>
            <person name="Chain P."/>
            <person name="Malfatti S."/>
            <person name="Shin M."/>
            <person name="Vergez L."/>
            <person name="Lang D."/>
            <person name="Schmutz J."/>
            <person name="Larimer F."/>
            <person name="Land M."/>
            <person name="Hauser L."/>
            <person name="Kyrpides N."/>
            <person name="Mikhailova N."/>
            <person name="Taghavi S."/>
            <person name="Monchy S."/>
            <person name="Newman L."/>
            <person name="Vangronsveld J."/>
            <person name="van der Lelie D."/>
            <person name="Richardson P."/>
        </authorList>
    </citation>
    <scope>NUCLEOTIDE SEQUENCE [LARGE SCALE GENOMIC DNA]</scope>
    <source>
        <strain>R551-3</strain>
    </source>
</reference>
<organism>
    <name type="scientific">Stenotrophomonas maltophilia (strain R551-3)</name>
    <dbReference type="NCBI Taxonomy" id="391008"/>
    <lineage>
        <taxon>Bacteria</taxon>
        <taxon>Pseudomonadati</taxon>
        <taxon>Pseudomonadota</taxon>
        <taxon>Gammaproteobacteria</taxon>
        <taxon>Lysobacterales</taxon>
        <taxon>Lysobacteraceae</taxon>
        <taxon>Stenotrophomonas</taxon>
        <taxon>Stenotrophomonas maltophilia group</taxon>
    </lineage>
</organism>
<feature type="chain" id="PRO_1000121821" description="Large ribosomal subunit protein uL29">
    <location>
        <begin position="1"/>
        <end position="61"/>
    </location>
</feature>
<evidence type="ECO:0000255" key="1">
    <source>
        <dbReference type="HAMAP-Rule" id="MF_00374"/>
    </source>
</evidence>
<evidence type="ECO:0000305" key="2"/>